<proteinExistence type="inferred from homology"/>
<feature type="chain" id="PRO_1000068514" description="Cation/acetate symporter ActP">
    <location>
        <begin position="1"/>
        <end position="549"/>
    </location>
</feature>
<feature type="transmembrane region" description="Helical" evidence="1">
    <location>
        <begin position="33"/>
        <end position="53"/>
    </location>
</feature>
<feature type="transmembrane region" description="Helical" evidence="1">
    <location>
        <begin position="77"/>
        <end position="97"/>
    </location>
</feature>
<feature type="transmembrane region" description="Helical" evidence="1">
    <location>
        <begin position="103"/>
        <end position="123"/>
    </location>
</feature>
<feature type="transmembrane region" description="Helical" evidence="1">
    <location>
        <begin position="148"/>
        <end position="168"/>
    </location>
</feature>
<feature type="transmembrane region" description="Helical" evidence="1">
    <location>
        <begin position="183"/>
        <end position="203"/>
    </location>
</feature>
<feature type="transmembrane region" description="Helical" evidence="1">
    <location>
        <begin position="206"/>
        <end position="226"/>
    </location>
</feature>
<feature type="transmembrane region" description="Helical" evidence="1">
    <location>
        <begin position="262"/>
        <end position="282"/>
    </location>
</feature>
<feature type="transmembrane region" description="Helical" evidence="1">
    <location>
        <begin position="303"/>
        <end position="323"/>
    </location>
</feature>
<feature type="transmembrane region" description="Helical" evidence="1">
    <location>
        <begin position="355"/>
        <end position="375"/>
    </location>
</feature>
<feature type="transmembrane region" description="Helical" evidence="1">
    <location>
        <begin position="404"/>
        <end position="424"/>
    </location>
</feature>
<feature type="transmembrane region" description="Helical" evidence="1">
    <location>
        <begin position="428"/>
        <end position="448"/>
    </location>
</feature>
<feature type="transmembrane region" description="Helical" evidence="1">
    <location>
        <begin position="464"/>
        <end position="484"/>
    </location>
</feature>
<feature type="transmembrane region" description="Helical" evidence="1">
    <location>
        <begin position="493"/>
        <end position="513"/>
    </location>
</feature>
<evidence type="ECO:0000255" key="1">
    <source>
        <dbReference type="HAMAP-Rule" id="MF_01426"/>
    </source>
</evidence>
<gene>
    <name evidence="1" type="primary">actP</name>
    <name type="ordered locus">EcE24377A_4622</name>
</gene>
<sequence length="549" mass="59197">MKRVLTALAATLPFAANAADAISGAVERQPTNWQAIIMFLIFVVFTLGITYWASKRVRSRSDYYTAGGNITGFQNGLAIAGDYMSAASFLGISALVFTSGYDGLIYSLGFLVGWPIILFLIAERLRNLGRYTFADVASYRLKQGPIRILSACGSLVVVALYLIAQMVGAGKLIELLFGLNYHIAVVLVGVLMMMYVLFGGMLATTWVQIIKAVLLLFGASFMAFMVMKHVGFSFNNLFSEAMAVHPKGVDIMKPGGLVKDPISALSLGLGLMFGTAGLPHILMRFFTVSDAREARKSVFYATGFMGYFYILTFIIGFGAIMLVGANPEYKDAAGHLIGGNNMAAVHLANAVGGNLFLGFISAVAFATILAVVAGLTLAGASAVSHDLYANVFKKGATEREELRVSKITVLILGVIAIILGVLFENQNIAFMVGLAFAIAASCNFPIILLSMYWSKLTTRGAMMGGWLGLITAVVLMILGPTIWVQILGHEKAIFPYEYPALFSITVAFLGIWFFSATDNSAEGARERELFRAQFIRSQTGFGVEQGRAH</sequence>
<keyword id="KW-0997">Cell inner membrane</keyword>
<keyword id="KW-1003">Cell membrane</keyword>
<keyword id="KW-0406">Ion transport</keyword>
<keyword id="KW-0472">Membrane</keyword>
<keyword id="KW-1185">Reference proteome</keyword>
<keyword id="KW-0915">Sodium</keyword>
<keyword id="KW-0739">Sodium transport</keyword>
<keyword id="KW-0769">Symport</keyword>
<keyword id="KW-0812">Transmembrane</keyword>
<keyword id="KW-1133">Transmembrane helix</keyword>
<keyword id="KW-0813">Transport</keyword>
<organism>
    <name type="scientific">Escherichia coli O139:H28 (strain E24377A / ETEC)</name>
    <dbReference type="NCBI Taxonomy" id="331111"/>
    <lineage>
        <taxon>Bacteria</taxon>
        <taxon>Pseudomonadati</taxon>
        <taxon>Pseudomonadota</taxon>
        <taxon>Gammaproteobacteria</taxon>
        <taxon>Enterobacterales</taxon>
        <taxon>Enterobacteriaceae</taxon>
        <taxon>Escherichia</taxon>
    </lineage>
</organism>
<comment type="function">
    <text evidence="1">Transports acetate.</text>
</comment>
<comment type="subcellular location">
    <subcellularLocation>
        <location evidence="1">Cell inner membrane</location>
        <topology evidence="1">Multi-pass membrane protein</topology>
    </subcellularLocation>
</comment>
<comment type="similarity">
    <text evidence="1">Belongs to the sodium:solute symporter (SSF) (TC 2.A.21) family.</text>
</comment>
<reference key="1">
    <citation type="journal article" date="2008" name="J. Bacteriol.">
        <title>The pangenome structure of Escherichia coli: comparative genomic analysis of E. coli commensal and pathogenic isolates.</title>
        <authorList>
            <person name="Rasko D.A."/>
            <person name="Rosovitz M.J."/>
            <person name="Myers G.S.A."/>
            <person name="Mongodin E.F."/>
            <person name="Fricke W.F."/>
            <person name="Gajer P."/>
            <person name="Crabtree J."/>
            <person name="Sebaihia M."/>
            <person name="Thomson N.R."/>
            <person name="Chaudhuri R."/>
            <person name="Henderson I.R."/>
            <person name="Sperandio V."/>
            <person name="Ravel J."/>
        </authorList>
    </citation>
    <scope>NUCLEOTIDE SEQUENCE [LARGE SCALE GENOMIC DNA]</scope>
    <source>
        <strain>E24377A / ETEC</strain>
    </source>
</reference>
<accession>A7ZUU1</accession>
<dbReference type="EMBL" id="CP000800">
    <property type="protein sequence ID" value="ABV19851.1"/>
    <property type="molecule type" value="Genomic_DNA"/>
</dbReference>
<dbReference type="RefSeq" id="WP_000832573.1">
    <property type="nucleotide sequence ID" value="NC_009801.1"/>
</dbReference>
<dbReference type="SMR" id="A7ZUU1"/>
<dbReference type="KEGG" id="ecw:EcE24377A_4622"/>
<dbReference type="HOGENOM" id="CLU_018808_8_3_6"/>
<dbReference type="Proteomes" id="UP000001122">
    <property type="component" value="Chromosome"/>
</dbReference>
<dbReference type="GO" id="GO:0005886">
    <property type="term" value="C:plasma membrane"/>
    <property type="evidence" value="ECO:0007669"/>
    <property type="project" value="UniProtKB-SubCell"/>
</dbReference>
<dbReference type="GO" id="GO:0015123">
    <property type="term" value="F:acetate transmembrane transporter activity"/>
    <property type="evidence" value="ECO:0007669"/>
    <property type="project" value="UniProtKB-UniRule"/>
</dbReference>
<dbReference type="GO" id="GO:0043879">
    <property type="term" value="F:glycolate transmembrane transporter activity"/>
    <property type="evidence" value="ECO:0007669"/>
    <property type="project" value="InterPro"/>
</dbReference>
<dbReference type="GO" id="GO:0015293">
    <property type="term" value="F:symporter activity"/>
    <property type="evidence" value="ECO:0007669"/>
    <property type="project" value="UniProtKB-KW"/>
</dbReference>
<dbReference type="GO" id="GO:0006847">
    <property type="term" value="P:plasma membrane acetate transport"/>
    <property type="evidence" value="ECO:0007669"/>
    <property type="project" value="TreeGrafter"/>
</dbReference>
<dbReference type="GO" id="GO:0006814">
    <property type="term" value="P:sodium ion transport"/>
    <property type="evidence" value="ECO:0007669"/>
    <property type="project" value="UniProtKB-KW"/>
</dbReference>
<dbReference type="CDD" id="cd11480">
    <property type="entry name" value="SLC5sbd_u4"/>
    <property type="match status" value="1"/>
</dbReference>
<dbReference type="FunFam" id="1.20.1730.10:FF:000001">
    <property type="entry name" value="Cation/acetate symporter ActP"/>
    <property type="match status" value="1"/>
</dbReference>
<dbReference type="Gene3D" id="1.20.1730.10">
    <property type="entry name" value="Sodium/glucose cotransporter"/>
    <property type="match status" value="1"/>
</dbReference>
<dbReference type="HAMAP" id="MF_01426">
    <property type="entry name" value="Acet_symport_ActP"/>
    <property type="match status" value="1"/>
</dbReference>
<dbReference type="InterPro" id="IPR014083">
    <property type="entry name" value="Cation/Ac_symporter_ActP"/>
</dbReference>
<dbReference type="InterPro" id="IPR038377">
    <property type="entry name" value="Na/Glc_symporter_sf"/>
</dbReference>
<dbReference type="InterPro" id="IPR001734">
    <property type="entry name" value="Na/solute_symporter"/>
</dbReference>
<dbReference type="InterPro" id="IPR018212">
    <property type="entry name" value="Na/solute_symporter_CS"/>
</dbReference>
<dbReference type="InterPro" id="IPR050277">
    <property type="entry name" value="Sodium:Solute_Symporter"/>
</dbReference>
<dbReference type="NCBIfam" id="NF006903">
    <property type="entry name" value="PRK09395.1"/>
    <property type="match status" value="1"/>
</dbReference>
<dbReference type="NCBIfam" id="NF009135">
    <property type="entry name" value="PRK12488.1"/>
    <property type="match status" value="1"/>
</dbReference>
<dbReference type="NCBIfam" id="TIGR00813">
    <property type="entry name" value="sss"/>
    <property type="match status" value="1"/>
</dbReference>
<dbReference type="NCBIfam" id="TIGR02711">
    <property type="entry name" value="symport_actP"/>
    <property type="match status" value="1"/>
</dbReference>
<dbReference type="PANTHER" id="PTHR48086:SF6">
    <property type="entry name" value="CATION_ACETATE SYMPORTER ACTP"/>
    <property type="match status" value="1"/>
</dbReference>
<dbReference type="PANTHER" id="PTHR48086">
    <property type="entry name" value="SODIUM/PROLINE SYMPORTER-RELATED"/>
    <property type="match status" value="1"/>
</dbReference>
<dbReference type="Pfam" id="PF00474">
    <property type="entry name" value="SSF"/>
    <property type="match status" value="1"/>
</dbReference>
<dbReference type="PROSITE" id="PS00456">
    <property type="entry name" value="NA_SOLUT_SYMP_1"/>
    <property type="match status" value="1"/>
</dbReference>
<dbReference type="PROSITE" id="PS00457">
    <property type="entry name" value="NA_SOLUT_SYMP_2"/>
    <property type="match status" value="1"/>
</dbReference>
<dbReference type="PROSITE" id="PS50283">
    <property type="entry name" value="NA_SOLUT_SYMP_3"/>
    <property type="match status" value="1"/>
</dbReference>
<protein>
    <recommendedName>
        <fullName evidence="1">Cation/acetate symporter ActP</fullName>
    </recommendedName>
    <alternativeName>
        <fullName evidence="1">Acetate permease</fullName>
    </alternativeName>
    <alternativeName>
        <fullName evidence="1">Acetate transporter ActP</fullName>
    </alternativeName>
</protein>
<name>ACTP_ECO24</name>